<name>STS1_ORYSJ</name>
<evidence type="ECO:0000255" key="1"/>
<evidence type="ECO:0000256" key="2">
    <source>
        <dbReference type="SAM" id="MobiDB-lite"/>
    </source>
</evidence>
<evidence type="ECO:0000269" key="3">
    <source>
    </source>
</evidence>
<evidence type="ECO:0000269" key="4">
    <source>
    </source>
</evidence>
<evidence type="ECO:0000303" key="5">
    <source>
    </source>
</evidence>
<evidence type="ECO:0000303" key="6">
    <source>
    </source>
</evidence>
<evidence type="ECO:0000305" key="7"/>
<evidence type="ECO:0000312" key="8">
    <source>
        <dbReference type="EMBL" id="ABF93614.1"/>
    </source>
</evidence>
<evidence type="ECO:0000312" key="9">
    <source>
        <dbReference type="EMBL" id="BAS81940.1"/>
    </source>
</evidence>
<evidence type="ECO:0000312" key="10">
    <source>
        <dbReference type="EMBL" id="EAZ25332.1"/>
    </source>
</evidence>
<feature type="chain" id="PRO_0000462177" description="Transmembrane and coiled-coil domain-containing protein STS1">
    <location>
        <begin position="1"/>
        <end position="661"/>
    </location>
</feature>
<feature type="transmembrane region" description="Helical" evidence="1">
    <location>
        <begin position="306"/>
        <end position="326"/>
    </location>
</feature>
<feature type="transmembrane region" description="Helical" evidence="1">
    <location>
        <begin position="333"/>
        <end position="353"/>
    </location>
</feature>
<feature type="transmembrane region" description="Helical" evidence="1">
    <location>
        <begin position="355"/>
        <end position="375"/>
    </location>
</feature>
<feature type="transmembrane region" description="Helical" evidence="1">
    <location>
        <begin position="466"/>
        <end position="486"/>
    </location>
</feature>
<feature type="region of interest" description="Disordered" evidence="2">
    <location>
        <begin position="34"/>
        <end position="71"/>
    </location>
</feature>
<feature type="region of interest" description="Disordered" evidence="2">
    <location>
        <begin position="154"/>
        <end position="185"/>
    </location>
</feature>
<feature type="compositionally biased region" description="Low complexity" evidence="2">
    <location>
        <begin position="59"/>
        <end position="69"/>
    </location>
</feature>
<feature type="compositionally biased region" description="Basic and acidic residues" evidence="2">
    <location>
        <begin position="175"/>
        <end position="184"/>
    </location>
</feature>
<keyword id="KW-0256">Endoplasmic reticulum</keyword>
<keyword id="KW-0378">Hydrolase</keyword>
<keyword id="KW-0472">Membrane</keyword>
<keyword id="KW-1185">Reference proteome</keyword>
<keyword id="KW-0812">Transmembrane</keyword>
<keyword id="KW-1133">Transmembrane helix</keyword>
<comment type="function">
    <text evidence="3 4">Involved in anther lipids biosynthesis and is required for tapetum degradation and pollen wall formation (PubMed:35748750, PubMed:36657664). Required for the formation of Ubisch bodies and microspores (PubMed:36657664). Possesses lipase activity in vitro toward two synthetic substrates, p-nitrophenyl acetate (pNPA) and p-nitrophenyl butyrate (pNPB) (PubMed:35748750).</text>
</comment>
<comment type="subunit">
    <text evidence="3">Interacts with PKS10/PKS2 and 4CLL9/ACOS12.</text>
</comment>
<comment type="subcellular location">
    <subcellularLocation>
        <location evidence="3 4">Endoplasmic reticulum membrane</location>
        <topology evidence="1">Multi-pass membrane protein</topology>
    </subcellularLocation>
</comment>
<comment type="developmental stage">
    <text evidence="3 4">During microspore development, mainly expressed in spikelets with developing anthers, pollen mother cells, tetrads, and tapetum.</text>
</comment>
<comment type="disruption phenotype">
    <text evidence="3 4">Male sterility due to delayed tapetum degradation and aborted pollen wall formation (PubMed:35748750, PubMed:36657664). Reduced amount of total monogalactosyldiacylglycerol (MGDG) and digalactosyldiacylglycerol (DGDG) in anthers (PubMed:35748750).</text>
</comment>
<comment type="similarity">
    <text evidence="7">Belongs to the TMCO4 family.</text>
</comment>
<comment type="sequence caution" evidence="7">
    <conflict type="erroneous gene model prediction">
        <sequence resource="EMBL-CDS" id="ABF93615"/>
    </conflict>
</comment>
<accession>Q10SS2</accession>
<accession>A3ADE3</accession>
<accession>Q10SS1</accession>
<sequence>MATTLTPTQRYAAGALLALALRQAQIHQSVLLGAHHHHDDDDEEQGRTSTSSGGGGGSSSSSSNSGAGADADLWTHDSHGLLRPVFRFLEIDPKAWSGLEETAASSEAKHHIGAFLRIIFEEDGESSSDRSVQELALAKGVDVMVMSLGNDSEVGNTIKGGDQDALPSSSGTDKSPGESSHDDQLGINKLTLDDIPANNHRKMALLFALLSACVADKPVSQEEEDRKSTRFRKGYDARHRVALRLLSTWLDVKWIKMEAIEVMVACSAMAAAKEQEQSQESASPKSKWEKWKRGGIIGAAALTGGALLAITGGLAAPAIAAGFGALAPTLGTLVPVIGASGFAAMATAAGSVAGSVAVAASFGAAGAGLTGSKMARRIGSVKEFEFKPIGENHNQGRLAVGILISGFAFDEDDFCRPWEGWQDNLERYILQWESKHIIAVSTAIQDWLTSRLAMELMKQGAMRTVLSGLLAAFAWPATLLAATDFIDSKWSVAIDRSDKAGKMLAEVLLKGLQGNRPVTLIGFSLGARVIFKCLQELALSSDNEGLVERVVLLGAPVSVKGERWEAARKMVAGRFVNVYSTDDWILGVTFRASLLTQGLAGIQAIDVPGVENVDVTELVDGHSSYLSAAQQILEHLELNTYYPVFVPLSAANEETDGTVAQ</sequence>
<proteinExistence type="evidence at protein level"/>
<reference key="1">
    <citation type="journal article" date="2005" name="Genome Res.">
        <title>Sequence, annotation, and analysis of synteny between rice chromosome 3 and diverged grass species.</title>
        <authorList>
            <consortium name="The rice chromosome 3 sequencing consortium"/>
            <person name="Buell C.R."/>
            <person name="Yuan Q."/>
            <person name="Ouyang S."/>
            <person name="Liu J."/>
            <person name="Zhu W."/>
            <person name="Wang A."/>
            <person name="Maiti R."/>
            <person name="Haas B."/>
            <person name="Wortman J."/>
            <person name="Pertea M."/>
            <person name="Jones K.M."/>
            <person name="Kim M."/>
            <person name="Overton L."/>
            <person name="Tsitrin T."/>
            <person name="Fadrosh D."/>
            <person name="Bera J."/>
            <person name="Weaver B."/>
            <person name="Jin S."/>
            <person name="Johri S."/>
            <person name="Reardon M."/>
            <person name="Webb K."/>
            <person name="Hill J."/>
            <person name="Moffat K."/>
            <person name="Tallon L."/>
            <person name="Van Aken S."/>
            <person name="Lewis M."/>
            <person name="Utterback T."/>
            <person name="Feldblyum T."/>
            <person name="Zismann V."/>
            <person name="Iobst S."/>
            <person name="Hsiao J."/>
            <person name="de Vazeille A.R."/>
            <person name="Salzberg S.L."/>
            <person name="White O."/>
            <person name="Fraser C.M."/>
            <person name="Yu Y."/>
            <person name="Kim H."/>
            <person name="Rambo T."/>
            <person name="Currie J."/>
            <person name="Collura K."/>
            <person name="Kernodle-Thompson S."/>
            <person name="Wei F."/>
            <person name="Kudrna K."/>
            <person name="Ammiraju J.S.S."/>
            <person name="Luo M."/>
            <person name="Goicoechea J.L."/>
            <person name="Wing R.A."/>
            <person name="Henry D."/>
            <person name="Oates R."/>
            <person name="Palmer M."/>
            <person name="Pries G."/>
            <person name="Saski C."/>
            <person name="Simmons J."/>
            <person name="Soderlund C."/>
            <person name="Nelson W."/>
            <person name="de la Bastide M."/>
            <person name="Spiegel L."/>
            <person name="Nascimento L."/>
            <person name="Huang E."/>
            <person name="Preston R."/>
            <person name="Zutavern T."/>
            <person name="Palmer L."/>
            <person name="O'Shaughnessy A."/>
            <person name="Dike S."/>
            <person name="McCombie W.R."/>
            <person name="Minx P."/>
            <person name="Cordum H."/>
            <person name="Wilson R."/>
            <person name="Jin W."/>
            <person name="Lee H.R."/>
            <person name="Jiang J."/>
            <person name="Jackson S."/>
        </authorList>
    </citation>
    <scope>NUCLEOTIDE SEQUENCE [LARGE SCALE GENOMIC DNA]</scope>
    <source>
        <strain>cv. Nipponbare</strain>
    </source>
</reference>
<reference key="2">
    <citation type="journal article" date="2005" name="Nature">
        <title>The map-based sequence of the rice genome.</title>
        <authorList>
            <consortium name="International rice genome sequencing project (IRGSP)"/>
        </authorList>
    </citation>
    <scope>NUCLEOTIDE SEQUENCE [LARGE SCALE GENOMIC DNA]</scope>
    <source>
        <strain>cv. Nipponbare</strain>
    </source>
</reference>
<reference key="3">
    <citation type="journal article" date="2008" name="Nucleic Acids Res.">
        <title>The rice annotation project database (RAP-DB): 2008 update.</title>
        <authorList>
            <consortium name="The rice annotation project (RAP)"/>
        </authorList>
    </citation>
    <scope>GENOME REANNOTATION</scope>
    <source>
        <strain>cv. Nipponbare</strain>
    </source>
</reference>
<reference key="4">
    <citation type="journal article" date="2013" name="Rice">
        <title>Improvement of the Oryza sativa Nipponbare reference genome using next generation sequence and optical map data.</title>
        <authorList>
            <person name="Kawahara Y."/>
            <person name="de la Bastide M."/>
            <person name="Hamilton J.P."/>
            <person name="Kanamori H."/>
            <person name="McCombie W.R."/>
            <person name="Ouyang S."/>
            <person name="Schwartz D.C."/>
            <person name="Tanaka T."/>
            <person name="Wu J."/>
            <person name="Zhou S."/>
            <person name="Childs K.L."/>
            <person name="Davidson R.M."/>
            <person name="Lin H."/>
            <person name="Quesada-Ocampo L."/>
            <person name="Vaillancourt B."/>
            <person name="Sakai H."/>
            <person name="Lee S.S."/>
            <person name="Kim J."/>
            <person name="Numa H."/>
            <person name="Itoh T."/>
            <person name="Buell C.R."/>
            <person name="Matsumoto T."/>
        </authorList>
    </citation>
    <scope>GENOME REANNOTATION</scope>
    <source>
        <strain>cv. Nipponbare</strain>
    </source>
</reference>
<reference key="5">
    <citation type="journal article" date="2005" name="PLoS Biol.">
        <title>The genomes of Oryza sativa: a history of duplications.</title>
        <authorList>
            <person name="Yu J."/>
            <person name="Wang J."/>
            <person name="Lin W."/>
            <person name="Li S."/>
            <person name="Li H."/>
            <person name="Zhou J."/>
            <person name="Ni P."/>
            <person name="Dong W."/>
            <person name="Hu S."/>
            <person name="Zeng C."/>
            <person name="Zhang J."/>
            <person name="Zhang Y."/>
            <person name="Li R."/>
            <person name="Xu Z."/>
            <person name="Li S."/>
            <person name="Li X."/>
            <person name="Zheng H."/>
            <person name="Cong L."/>
            <person name="Lin L."/>
            <person name="Yin J."/>
            <person name="Geng J."/>
            <person name="Li G."/>
            <person name="Shi J."/>
            <person name="Liu J."/>
            <person name="Lv H."/>
            <person name="Li J."/>
            <person name="Wang J."/>
            <person name="Deng Y."/>
            <person name="Ran L."/>
            <person name="Shi X."/>
            <person name="Wang X."/>
            <person name="Wu Q."/>
            <person name="Li C."/>
            <person name="Ren X."/>
            <person name="Wang J."/>
            <person name="Wang X."/>
            <person name="Li D."/>
            <person name="Liu D."/>
            <person name="Zhang X."/>
            <person name="Ji Z."/>
            <person name="Zhao W."/>
            <person name="Sun Y."/>
            <person name="Zhang Z."/>
            <person name="Bao J."/>
            <person name="Han Y."/>
            <person name="Dong L."/>
            <person name="Ji J."/>
            <person name="Chen P."/>
            <person name="Wu S."/>
            <person name="Liu J."/>
            <person name="Xiao Y."/>
            <person name="Bu D."/>
            <person name="Tan J."/>
            <person name="Yang L."/>
            <person name="Ye C."/>
            <person name="Zhang J."/>
            <person name="Xu J."/>
            <person name="Zhou Y."/>
            <person name="Yu Y."/>
            <person name="Zhang B."/>
            <person name="Zhuang S."/>
            <person name="Wei H."/>
            <person name="Liu B."/>
            <person name="Lei M."/>
            <person name="Yu H."/>
            <person name="Li Y."/>
            <person name="Xu H."/>
            <person name="Wei S."/>
            <person name="He X."/>
            <person name="Fang L."/>
            <person name="Zhang Z."/>
            <person name="Zhang Y."/>
            <person name="Huang X."/>
            <person name="Su Z."/>
            <person name="Tong W."/>
            <person name="Li J."/>
            <person name="Tong Z."/>
            <person name="Li S."/>
            <person name="Ye J."/>
            <person name="Wang L."/>
            <person name="Fang L."/>
            <person name="Lei T."/>
            <person name="Chen C.-S."/>
            <person name="Chen H.-C."/>
            <person name="Xu Z."/>
            <person name="Li H."/>
            <person name="Huang H."/>
            <person name="Zhang F."/>
            <person name="Xu H."/>
            <person name="Li N."/>
            <person name="Zhao C."/>
            <person name="Li S."/>
            <person name="Dong L."/>
            <person name="Huang Y."/>
            <person name="Li L."/>
            <person name="Xi Y."/>
            <person name="Qi Q."/>
            <person name="Li W."/>
            <person name="Zhang B."/>
            <person name="Hu W."/>
            <person name="Zhang Y."/>
            <person name="Tian X."/>
            <person name="Jiao Y."/>
            <person name="Liang X."/>
            <person name="Jin J."/>
            <person name="Gao L."/>
            <person name="Zheng W."/>
            <person name="Hao B."/>
            <person name="Liu S.-M."/>
            <person name="Wang W."/>
            <person name="Yuan L."/>
            <person name="Cao M."/>
            <person name="McDermott J."/>
            <person name="Samudrala R."/>
            <person name="Wang J."/>
            <person name="Wong G.K.-S."/>
            <person name="Yang H."/>
        </authorList>
    </citation>
    <scope>NUCLEOTIDE SEQUENCE [LARGE SCALE GENOMIC DNA]</scope>
    <source>
        <strain>cv. Nipponbare</strain>
    </source>
</reference>
<reference key="6">
    <citation type="journal article" date="2003" name="Science">
        <title>Collection, mapping, and annotation of over 28,000 cDNA clones from japonica rice.</title>
        <authorList>
            <consortium name="The rice full-length cDNA consortium"/>
        </authorList>
    </citation>
    <scope>NUCLEOTIDE SEQUENCE [LARGE SCALE MRNA]</scope>
    <source>
        <strain>cv. Nipponbare</strain>
    </source>
</reference>
<reference key="7">
    <citation type="journal article" date="2022" name="Plant Physiol.">
        <title>SWOLLEN TAPETUM AND STERILITY 1 is required for tapetum degeneration and pollen wall formation in rice.</title>
        <authorList>
            <person name="Yuan G."/>
            <person name="Zou T."/>
            <person name="He Z."/>
            <person name="Xiao Q."/>
            <person name="Li G."/>
            <person name="Liu S."/>
            <person name="Xiong P."/>
            <person name="Chen H."/>
            <person name="Peng K."/>
            <person name="Zhang X."/>
            <person name="Luo T."/>
            <person name="Zhou D."/>
            <person name="Yang S."/>
            <person name="Zhou F."/>
            <person name="Zhang K."/>
            <person name="Zheng K."/>
            <person name="Han Y."/>
            <person name="Zhu J."/>
            <person name="Liang Y."/>
            <person name="Deng Q."/>
            <person name="Wang S."/>
            <person name="Sun C."/>
            <person name="Yu X."/>
            <person name="Liu H."/>
            <person name="Wang L."/>
            <person name="Li P."/>
            <person name="Li S."/>
        </authorList>
    </citation>
    <scope>FUNCTION</scope>
    <scope>CATALYTIC ACTIVITY</scope>
    <scope>SUBCELLULAR LOCATION</scope>
    <scope>INTERACTION WITH PKS10/PKS2 AND 4CLL9/ACOS12</scope>
    <scope>DEVELOPMENTAL STAGE</scope>
    <scope>DISRUPTION PHENOTYPE</scope>
</reference>
<reference key="8">
    <citation type="journal article" date="2023" name="Plant Sci.">
        <title>OsLDDT1, encoding a transmembrane structural DUF726 family protein, is essential for tapetum degradation and pollen formation in rice.</title>
        <authorList>
            <person name="Sun Z."/>
            <person name="Liu K."/>
            <person name="Chen C."/>
            <person name="Chen D."/>
            <person name="Peng Z."/>
            <person name="Zhou R."/>
            <person name="Liu L."/>
            <person name="He D."/>
            <person name="Duan W."/>
            <person name="Chen H."/>
            <person name="Huang C."/>
            <person name="Ruan Z."/>
            <person name="Zhang Y."/>
            <person name="Cao L."/>
            <person name="Zhan X."/>
            <person name="Cheng S."/>
            <person name="Sun L."/>
        </authorList>
    </citation>
    <scope>FUNCTION</scope>
    <scope>SUBCELLULAR LOCATION</scope>
    <scope>DEVELOPMENTAL STAGE</scope>
    <scope>DISRUPTION PHENOTYPE</scope>
</reference>
<protein>
    <recommendedName>
        <fullName evidence="7">Transmembrane and coiled-coil domain-containing protein STS1</fullName>
    </recommendedName>
    <alternativeName>
        <fullName evidence="7">Lipase STS1</fullName>
        <ecNumber evidence="3">3.1.1.-</ecNumber>
    </alternativeName>
    <alternativeName>
        <fullName evidence="6">Protein LEAKED AND DELAYED DEGRADED TAPETUM 1</fullName>
    </alternativeName>
    <alternativeName>
        <fullName evidence="5">Protein SWOLLEN TAPETUM AND STERILITY 1</fullName>
    </alternativeName>
</protein>
<organism>
    <name type="scientific">Oryza sativa subsp. japonica</name>
    <name type="common">Rice</name>
    <dbReference type="NCBI Taxonomy" id="39947"/>
    <lineage>
        <taxon>Eukaryota</taxon>
        <taxon>Viridiplantae</taxon>
        <taxon>Streptophyta</taxon>
        <taxon>Embryophyta</taxon>
        <taxon>Tracheophyta</taxon>
        <taxon>Spermatophyta</taxon>
        <taxon>Magnoliopsida</taxon>
        <taxon>Liliopsida</taxon>
        <taxon>Poales</taxon>
        <taxon>Poaceae</taxon>
        <taxon>BOP clade</taxon>
        <taxon>Oryzoideae</taxon>
        <taxon>Oryzeae</taxon>
        <taxon>Oryzinae</taxon>
        <taxon>Oryza</taxon>
        <taxon>Oryza sativa</taxon>
    </lineage>
</organism>
<gene>
    <name evidence="5" type="primary">STS1</name>
    <name evidence="6" type="synonym">LDDT1</name>
    <name evidence="9" type="ordered locus">Os03g0112800</name>
    <name evidence="8" type="ordered locus">LOC_Os03g02170</name>
    <name evidence="10" type="ORF">OsJ_09144</name>
</gene>
<dbReference type="EC" id="3.1.1.-" evidence="3"/>
<dbReference type="EMBL" id="DP000009">
    <property type="protein sequence ID" value="ABF93614.1"/>
    <property type="molecule type" value="Genomic_DNA"/>
</dbReference>
<dbReference type="EMBL" id="DP000009">
    <property type="protein sequence ID" value="ABF93615.1"/>
    <property type="status" value="ALT_SEQ"/>
    <property type="molecule type" value="Genomic_DNA"/>
</dbReference>
<dbReference type="EMBL" id="AP008209">
    <property type="protein sequence ID" value="BAF10645.1"/>
    <property type="molecule type" value="Genomic_DNA"/>
</dbReference>
<dbReference type="EMBL" id="AP014959">
    <property type="protein sequence ID" value="BAS81940.1"/>
    <property type="molecule type" value="Genomic_DNA"/>
</dbReference>
<dbReference type="EMBL" id="CM000140">
    <property type="protein sequence ID" value="EAZ25332.1"/>
    <property type="molecule type" value="Genomic_DNA"/>
</dbReference>
<dbReference type="EMBL" id="AK100572">
    <property type="protein sequence ID" value="BAG94661.1"/>
    <property type="molecule type" value="mRNA"/>
</dbReference>
<dbReference type="RefSeq" id="XP_015630501.1">
    <property type="nucleotide sequence ID" value="XM_015775015.1"/>
</dbReference>
<dbReference type="FunCoup" id="Q10SS2">
    <property type="interactions" value="572"/>
</dbReference>
<dbReference type="ESTHER" id="orysj-q10ss2">
    <property type="family name" value="Duf_726"/>
</dbReference>
<dbReference type="PaxDb" id="39947-Q10SS2"/>
<dbReference type="EnsemblPlants" id="Os03t0112800-01">
    <property type="protein sequence ID" value="Os03t0112800-01"/>
    <property type="gene ID" value="Os03g0112800"/>
</dbReference>
<dbReference type="Gramene" id="Os03t0112800-01">
    <property type="protein sequence ID" value="Os03t0112800-01"/>
    <property type="gene ID" value="Os03g0112800"/>
</dbReference>
<dbReference type="KEGG" id="dosa:Os03g0112800"/>
<dbReference type="eggNOG" id="KOG2385">
    <property type="taxonomic scope" value="Eukaryota"/>
</dbReference>
<dbReference type="HOGENOM" id="CLU_016865_1_0_1"/>
<dbReference type="OMA" id="CKTEHLK"/>
<dbReference type="OrthoDB" id="8526at2759"/>
<dbReference type="Proteomes" id="UP000000763">
    <property type="component" value="Chromosome 3"/>
</dbReference>
<dbReference type="Proteomes" id="UP000007752">
    <property type="component" value="Chromosome 3"/>
</dbReference>
<dbReference type="Proteomes" id="UP000059680">
    <property type="component" value="Chromosome 3"/>
</dbReference>
<dbReference type="GO" id="GO:0005789">
    <property type="term" value="C:endoplasmic reticulum membrane"/>
    <property type="evidence" value="ECO:0000314"/>
    <property type="project" value="UniProtKB"/>
</dbReference>
<dbReference type="GO" id="GO:0016020">
    <property type="term" value="C:membrane"/>
    <property type="evidence" value="ECO:0007669"/>
    <property type="project" value="UniProtKB-KW"/>
</dbReference>
<dbReference type="GO" id="GO:0052689">
    <property type="term" value="F:carboxylic ester hydrolase activity"/>
    <property type="evidence" value="ECO:0000314"/>
    <property type="project" value="UniProtKB"/>
</dbReference>
<dbReference type="GO" id="GO:0010208">
    <property type="term" value="P:pollen wall assembly"/>
    <property type="evidence" value="ECO:0000315"/>
    <property type="project" value="UniProtKB"/>
</dbReference>
<dbReference type="Gene3D" id="3.40.50.1820">
    <property type="entry name" value="alpha/beta hydrolase"/>
    <property type="match status" value="1"/>
</dbReference>
<dbReference type="InterPro" id="IPR029058">
    <property type="entry name" value="AB_hydrolase_fold"/>
</dbReference>
<dbReference type="InterPro" id="IPR007941">
    <property type="entry name" value="DUF726"/>
</dbReference>
<dbReference type="PANTHER" id="PTHR17920:SF3">
    <property type="entry name" value="TRANSMEMBRANE AND COILED-COIL DOMAIN-CONTAINING PROTEIN 4"/>
    <property type="match status" value="1"/>
</dbReference>
<dbReference type="PANTHER" id="PTHR17920">
    <property type="entry name" value="TRANSMEMBRANE AND COILED-COIL DOMAIN-CONTAINING PROTEIN 4 TMCO4"/>
    <property type="match status" value="1"/>
</dbReference>
<dbReference type="Pfam" id="PF05277">
    <property type="entry name" value="DUF726"/>
    <property type="match status" value="1"/>
</dbReference>
<dbReference type="SUPFAM" id="SSF53474">
    <property type="entry name" value="alpha/beta-Hydrolases"/>
    <property type="match status" value="1"/>
</dbReference>